<keyword id="KW-0535">Nitrogen fixation</keyword>
<keyword id="KW-0614">Plasmid</keyword>
<keyword id="KW-1185">Reference proteome</keyword>
<accession>P55675</accession>
<feature type="chain" id="PRO_0000096831" description="Protein NifX">
    <location>
        <begin position="1"/>
        <end position="160"/>
    </location>
</feature>
<dbReference type="EMBL" id="U00090">
    <property type="protein sequence ID" value="AAB91904.1"/>
    <property type="molecule type" value="Genomic_DNA"/>
</dbReference>
<dbReference type="RefSeq" id="NP_444117.1">
    <property type="nucleotide sequence ID" value="NC_000914.2"/>
</dbReference>
<dbReference type="RefSeq" id="WP_010875149.1">
    <property type="nucleotide sequence ID" value="NC_000914.2"/>
</dbReference>
<dbReference type="SMR" id="P55675"/>
<dbReference type="KEGG" id="rhi:NGR_a01080"/>
<dbReference type="PATRIC" id="fig|394.7.peg.92"/>
<dbReference type="eggNOG" id="COG1433">
    <property type="taxonomic scope" value="Bacteria"/>
</dbReference>
<dbReference type="HOGENOM" id="CLU_104194_3_0_5"/>
<dbReference type="OrthoDB" id="9797941at2"/>
<dbReference type="Proteomes" id="UP000001054">
    <property type="component" value="Plasmid pNGR234a"/>
</dbReference>
<dbReference type="GO" id="GO:0051540">
    <property type="term" value="F:metal cluster binding"/>
    <property type="evidence" value="ECO:0007669"/>
    <property type="project" value="InterPro"/>
</dbReference>
<dbReference type="GO" id="GO:0009399">
    <property type="term" value="P:nitrogen fixation"/>
    <property type="evidence" value="ECO:0007669"/>
    <property type="project" value="UniProtKB-KW"/>
</dbReference>
<dbReference type="CDD" id="cd00853">
    <property type="entry name" value="NifX"/>
    <property type="match status" value="1"/>
</dbReference>
<dbReference type="Gene3D" id="3.30.420.130">
    <property type="entry name" value="Dinitrogenase iron-molybdenum cofactor biosynthesis domain"/>
    <property type="match status" value="1"/>
</dbReference>
<dbReference type="InterPro" id="IPR003731">
    <property type="entry name" value="Di-Nase_FeMo-co_biosynth"/>
</dbReference>
<dbReference type="InterPro" id="IPR036105">
    <property type="entry name" value="DiNase_FeMo-co_biosyn_sf"/>
</dbReference>
<dbReference type="InterPro" id="IPR013480">
    <property type="entry name" value="NifX"/>
</dbReference>
<dbReference type="InterPro" id="IPR034169">
    <property type="entry name" value="NifX-like"/>
</dbReference>
<dbReference type="InterPro" id="IPR051840">
    <property type="entry name" value="NifX/NifY_domain"/>
</dbReference>
<dbReference type="NCBIfam" id="TIGR02663">
    <property type="entry name" value="nifX"/>
    <property type="match status" value="1"/>
</dbReference>
<dbReference type="PANTHER" id="PTHR33937:SF1">
    <property type="entry name" value="IRON-MOLIBDENUM COFACTOR PROCESSING PROTEIN"/>
    <property type="match status" value="1"/>
</dbReference>
<dbReference type="PANTHER" id="PTHR33937">
    <property type="entry name" value="IRON-MOLYBDENUM PROTEIN-RELATED-RELATED"/>
    <property type="match status" value="1"/>
</dbReference>
<dbReference type="Pfam" id="PF02579">
    <property type="entry name" value="Nitro_FeMo-Co"/>
    <property type="match status" value="1"/>
</dbReference>
<dbReference type="SUPFAM" id="SSF53146">
    <property type="entry name" value="Nitrogenase accessory factor-like"/>
    <property type="match status" value="1"/>
</dbReference>
<comment type="similarity">
    <text evidence="1">Belongs to the NifX/NifY family.</text>
</comment>
<evidence type="ECO:0000305" key="1"/>
<organism>
    <name type="scientific">Sinorhizobium fredii (strain NBRC 101917 / NGR234)</name>
    <dbReference type="NCBI Taxonomy" id="394"/>
    <lineage>
        <taxon>Bacteria</taxon>
        <taxon>Pseudomonadati</taxon>
        <taxon>Pseudomonadota</taxon>
        <taxon>Alphaproteobacteria</taxon>
        <taxon>Hyphomicrobiales</taxon>
        <taxon>Rhizobiaceae</taxon>
        <taxon>Sinorhizobium/Ensifer group</taxon>
        <taxon>Sinorhizobium</taxon>
    </lineage>
</organism>
<reference key="1">
    <citation type="journal article" date="1997" name="Nature">
        <title>Molecular basis of symbiosis between Rhizobium and legumes.</title>
        <authorList>
            <person name="Freiberg C.A."/>
            <person name="Fellay R."/>
            <person name="Bairoch A."/>
            <person name="Broughton W.J."/>
            <person name="Rosenthal A."/>
            <person name="Perret X."/>
        </authorList>
    </citation>
    <scope>NUCLEOTIDE SEQUENCE [LARGE SCALE GENOMIC DNA]</scope>
    <source>
        <strain>NBRC 101917 / NGR234</strain>
    </source>
</reference>
<reference key="2">
    <citation type="journal article" date="2009" name="Appl. Environ. Microbiol.">
        <title>Rhizobium sp. strain NGR234 possesses a remarkable number of secretion systems.</title>
        <authorList>
            <person name="Schmeisser C."/>
            <person name="Liesegang H."/>
            <person name="Krysciak D."/>
            <person name="Bakkou N."/>
            <person name="Le Quere A."/>
            <person name="Wollherr A."/>
            <person name="Heinemeyer I."/>
            <person name="Morgenstern B."/>
            <person name="Pommerening-Roeser A."/>
            <person name="Flores M."/>
            <person name="Palacios R."/>
            <person name="Brenner S."/>
            <person name="Gottschalk G."/>
            <person name="Schmitz R.A."/>
            <person name="Broughton W.J."/>
            <person name="Perret X."/>
            <person name="Strittmatter A.W."/>
            <person name="Streit W.R."/>
        </authorList>
    </citation>
    <scope>NUCLEOTIDE SEQUENCE [LARGE SCALE GENOMIC DNA]</scope>
    <source>
        <strain>NBRC 101917 / NGR234</strain>
    </source>
</reference>
<name>NIFX_SINFN</name>
<gene>
    <name type="primary">nifX</name>
    <name type="ordered locus">NGR_a01080</name>
    <name type="ORF">y4vP</name>
</gene>
<protein>
    <recommendedName>
        <fullName>Protein NifX</fullName>
    </recommendedName>
</protein>
<proteinExistence type="inferred from homology"/>
<sequence>MNSVRRLSLVTDEIQPRRSGALRIAIATQDMKVLNAHFGSAKHFAVYDVSRDGWDFVEAVSFDDVSDESGKHPIEGEDRITPKVTALTGCHLLFCRAIGGPSAARVVSAKIHPIRVGEPEAIQDVLSRTQKMLKTAPPPWLRKVLAQAGVAEKKPFEDED</sequence>
<geneLocation type="plasmid">
    <name>sym pNGR234a</name>
</geneLocation>